<dbReference type="EC" id="4.1.1.6" evidence="4 5 6"/>
<dbReference type="EMBL" id="AC000403">
    <property type="status" value="NOT_ANNOTATED_CDS"/>
    <property type="molecule type" value="Genomic_DNA"/>
</dbReference>
<dbReference type="CCDS" id="CCDS58299.1"/>
<dbReference type="RefSeq" id="NP_001245335.1">
    <property type="nucleotide sequence ID" value="NM_001258406.2"/>
</dbReference>
<dbReference type="PDB" id="6R6U">
    <property type="method" value="X-ray"/>
    <property type="resolution" value="1.71 A"/>
    <property type="chains" value="A/B=4-461"/>
</dbReference>
<dbReference type="PDBsum" id="6R6U"/>
<dbReference type="SMR" id="A6NK06"/>
<dbReference type="BioGRID" id="610637">
    <property type="interactions" value="3"/>
</dbReference>
<dbReference type="FunCoup" id="A6NK06">
    <property type="interactions" value="13"/>
</dbReference>
<dbReference type="STRING" id="9606.ENSP00000366682"/>
<dbReference type="GlyGen" id="A6NK06">
    <property type="glycosylation" value="1 site, 1 N-linked glycan (1 site)"/>
</dbReference>
<dbReference type="iPTMnet" id="A6NK06"/>
<dbReference type="PhosphoSitePlus" id="A6NK06"/>
<dbReference type="BioMuta" id="ACOD1"/>
<dbReference type="MassIVE" id="A6NK06"/>
<dbReference type="PaxDb" id="9606-ENSP00000366682"/>
<dbReference type="PeptideAtlas" id="A6NK06"/>
<dbReference type="Antibodypedia" id="50071">
    <property type="antibodies" value="72 antibodies from 14 providers"/>
</dbReference>
<dbReference type="DNASU" id="730249"/>
<dbReference type="Ensembl" id="ENST00000377462.6">
    <property type="protein sequence ID" value="ENSP00000366682.1"/>
    <property type="gene ID" value="ENSG00000102794.11"/>
</dbReference>
<dbReference type="GeneID" id="730249"/>
<dbReference type="KEGG" id="hsa:730249"/>
<dbReference type="MANE-Select" id="ENST00000377462.6">
    <property type="protein sequence ID" value="ENSP00000366682.1"/>
    <property type="RefSeq nucleotide sequence ID" value="NM_001258406.2"/>
    <property type="RefSeq protein sequence ID" value="NP_001245335.1"/>
</dbReference>
<dbReference type="UCSC" id="uc031qmi.3">
    <property type="organism name" value="human"/>
</dbReference>
<dbReference type="AGR" id="HGNC:33904"/>
<dbReference type="CTD" id="730249"/>
<dbReference type="DisGeNET" id="730249"/>
<dbReference type="GeneCards" id="ACOD1"/>
<dbReference type="HGNC" id="HGNC:33904">
    <property type="gene designation" value="ACOD1"/>
</dbReference>
<dbReference type="HPA" id="ENSG00000102794">
    <property type="expression patterns" value="Tissue enhanced (lymphoid)"/>
</dbReference>
<dbReference type="MIM" id="615275">
    <property type="type" value="gene"/>
</dbReference>
<dbReference type="neXtProt" id="NX_A6NK06"/>
<dbReference type="OpenTargets" id="ENSG00000102794"/>
<dbReference type="VEuPathDB" id="HostDB:ENSG00000102794"/>
<dbReference type="eggNOG" id="ENOG502QVEB">
    <property type="taxonomic scope" value="Eukaryota"/>
</dbReference>
<dbReference type="GeneTree" id="ENSGT00390000015700"/>
<dbReference type="HOGENOM" id="CLU_026574_2_2_1"/>
<dbReference type="InParanoid" id="A6NK06"/>
<dbReference type="OMA" id="KFHASCR"/>
<dbReference type="OrthoDB" id="10267976at2759"/>
<dbReference type="PAN-GO" id="A6NK06">
    <property type="GO annotations" value="3 GO annotations based on evolutionary models"/>
</dbReference>
<dbReference type="PhylomeDB" id="A6NK06"/>
<dbReference type="TreeFam" id="TF332296"/>
<dbReference type="BioCyc" id="MetaCyc:ENSG00000102794-MONOMER"/>
<dbReference type="BRENDA" id="4.1.1.6">
    <property type="organism ID" value="2681"/>
</dbReference>
<dbReference type="BioGRID-ORCS" id="730249">
    <property type="hits" value="2 hits in 1123 CRISPR screens"/>
</dbReference>
<dbReference type="GenomeRNAi" id="730249"/>
<dbReference type="Pharos" id="A6NK06">
    <property type="development level" value="Tbio"/>
</dbReference>
<dbReference type="PRO" id="PR:A6NK06"/>
<dbReference type="Proteomes" id="UP000005640">
    <property type="component" value="Chromosome 13"/>
</dbReference>
<dbReference type="RNAct" id="A6NK06">
    <property type="molecule type" value="protein"/>
</dbReference>
<dbReference type="Bgee" id="ENSG00000102794">
    <property type="expression patterns" value="Expressed in nasal cavity epithelium and 41 other cell types or tissues"/>
</dbReference>
<dbReference type="ExpressionAtlas" id="A6NK06">
    <property type="expression patterns" value="baseline and differential"/>
</dbReference>
<dbReference type="GO" id="GO:0005739">
    <property type="term" value="C:mitochondrion"/>
    <property type="evidence" value="ECO:0000250"/>
    <property type="project" value="UniProtKB"/>
</dbReference>
<dbReference type="GO" id="GO:0047613">
    <property type="term" value="F:aconitate decarboxylase activity"/>
    <property type="evidence" value="ECO:0000314"/>
    <property type="project" value="UniProtKB"/>
</dbReference>
<dbReference type="GO" id="GO:0042803">
    <property type="term" value="F:protein homodimerization activity"/>
    <property type="evidence" value="ECO:0000314"/>
    <property type="project" value="UniProtKB"/>
</dbReference>
<dbReference type="GO" id="GO:0035458">
    <property type="term" value="P:cellular response to interferon-beta"/>
    <property type="evidence" value="ECO:0000250"/>
    <property type="project" value="UniProtKB"/>
</dbReference>
<dbReference type="GO" id="GO:0071347">
    <property type="term" value="P:cellular response to interleukin-1"/>
    <property type="evidence" value="ECO:0000250"/>
    <property type="project" value="UniProtKB"/>
</dbReference>
<dbReference type="GO" id="GO:0071222">
    <property type="term" value="P:cellular response to lipopolysaccharide"/>
    <property type="evidence" value="ECO:0000314"/>
    <property type="project" value="UniProtKB"/>
</dbReference>
<dbReference type="GO" id="GO:0071219">
    <property type="term" value="P:cellular response to molecule of bacterial origin"/>
    <property type="evidence" value="ECO:0000250"/>
    <property type="project" value="UniProtKB"/>
</dbReference>
<dbReference type="GO" id="GO:0071393">
    <property type="term" value="P:cellular response to progesterone stimulus"/>
    <property type="evidence" value="ECO:0000250"/>
    <property type="project" value="UniProtKB"/>
</dbReference>
<dbReference type="GO" id="GO:0071356">
    <property type="term" value="P:cellular response to tumor necrosis factor"/>
    <property type="evidence" value="ECO:0000250"/>
    <property type="project" value="UniProtKB"/>
</dbReference>
<dbReference type="GO" id="GO:0071346">
    <property type="term" value="P:cellular response to type II interferon"/>
    <property type="evidence" value="ECO:0000250"/>
    <property type="project" value="UniProtKB"/>
</dbReference>
<dbReference type="GO" id="GO:0006952">
    <property type="term" value="P:defense response"/>
    <property type="evidence" value="ECO:0000314"/>
    <property type="project" value="UniProtKB"/>
</dbReference>
<dbReference type="GO" id="GO:0051607">
    <property type="term" value="P:defense response to virus"/>
    <property type="evidence" value="ECO:0000250"/>
    <property type="project" value="UniProtKB"/>
</dbReference>
<dbReference type="GO" id="GO:0007566">
    <property type="term" value="P:embryo implantation"/>
    <property type="evidence" value="ECO:0000250"/>
    <property type="project" value="UniProtKB"/>
</dbReference>
<dbReference type="GO" id="GO:0006954">
    <property type="term" value="P:inflammatory response"/>
    <property type="evidence" value="ECO:0007669"/>
    <property type="project" value="UniProtKB-KW"/>
</dbReference>
<dbReference type="GO" id="GO:0050728">
    <property type="term" value="P:negative regulation of inflammatory response"/>
    <property type="evidence" value="ECO:0000250"/>
    <property type="project" value="UniProtKB"/>
</dbReference>
<dbReference type="GO" id="GO:0045824">
    <property type="term" value="P:negative regulation of innate immune response"/>
    <property type="evidence" value="ECO:0000250"/>
    <property type="project" value="UniProtKB"/>
</dbReference>
<dbReference type="GO" id="GO:0032088">
    <property type="term" value="P:negative regulation of NF-kappaB transcription factor activity"/>
    <property type="evidence" value="ECO:0000250"/>
    <property type="project" value="UniProtKB"/>
</dbReference>
<dbReference type="GO" id="GO:0034136">
    <property type="term" value="P:negative regulation of toll-like receptor 2 signaling pathway"/>
    <property type="evidence" value="ECO:0000250"/>
    <property type="project" value="UniProtKB"/>
</dbReference>
<dbReference type="GO" id="GO:0034144">
    <property type="term" value="P:negative regulation of toll-like receptor 4 signaling pathway"/>
    <property type="evidence" value="ECO:0000250"/>
    <property type="project" value="UniProtKB"/>
</dbReference>
<dbReference type="GO" id="GO:0032480">
    <property type="term" value="P:negative regulation of type I interferon production"/>
    <property type="evidence" value="ECO:0000250"/>
    <property type="project" value="UniProtKB"/>
</dbReference>
<dbReference type="GO" id="GO:0002760">
    <property type="term" value="P:positive regulation of antimicrobial humoral response"/>
    <property type="evidence" value="ECO:0000314"/>
    <property type="project" value="UniProtKB"/>
</dbReference>
<dbReference type="GO" id="GO:2000379">
    <property type="term" value="P:positive regulation of reactive oxygen species metabolic process"/>
    <property type="evidence" value="ECO:0000250"/>
    <property type="project" value="UniProtKB"/>
</dbReference>
<dbReference type="GO" id="GO:0072573">
    <property type="term" value="P:tolerance induction to lipopolysaccharide"/>
    <property type="evidence" value="ECO:0000314"/>
    <property type="project" value="UniProtKB"/>
</dbReference>
<dbReference type="FunFam" id="1.10.4100.10:FF:000002">
    <property type="entry name" value="Aconitate decarboxylase 1"/>
    <property type="match status" value="1"/>
</dbReference>
<dbReference type="FunFam" id="3.30.1330.120:FF:000002">
    <property type="entry name" value="Aconitate decarboxylase 1"/>
    <property type="match status" value="1"/>
</dbReference>
<dbReference type="Gene3D" id="1.10.4100.10">
    <property type="entry name" value="2-methylcitrate dehydratase PrpD"/>
    <property type="match status" value="1"/>
</dbReference>
<dbReference type="Gene3D" id="3.30.1330.120">
    <property type="entry name" value="2-methylcitrate dehydratase PrpD"/>
    <property type="match status" value="1"/>
</dbReference>
<dbReference type="InterPro" id="IPR036148">
    <property type="entry name" value="MmgE/PrpD_sf"/>
</dbReference>
<dbReference type="InterPro" id="IPR042183">
    <property type="entry name" value="MmgE/PrpD_sf_1"/>
</dbReference>
<dbReference type="InterPro" id="IPR042188">
    <property type="entry name" value="MmgE/PrpD_sf_2"/>
</dbReference>
<dbReference type="InterPro" id="IPR005656">
    <property type="entry name" value="MmgE_PrpD"/>
</dbReference>
<dbReference type="InterPro" id="IPR045337">
    <property type="entry name" value="MmgE_PrpD_C"/>
</dbReference>
<dbReference type="InterPro" id="IPR045336">
    <property type="entry name" value="MmgE_PrpD_N"/>
</dbReference>
<dbReference type="PANTHER" id="PTHR16943">
    <property type="entry name" value="2-METHYLCITRATE DEHYDRATASE-RELATED"/>
    <property type="match status" value="1"/>
</dbReference>
<dbReference type="PANTHER" id="PTHR16943:SF11">
    <property type="entry name" value="CIS-ACONITATE DECARBOXYLASE"/>
    <property type="match status" value="1"/>
</dbReference>
<dbReference type="Pfam" id="PF19305">
    <property type="entry name" value="MmgE_PrpD_C"/>
    <property type="match status" value="1"/>
</dbReference>
<dbReference type="Pfam" id="PF03972">
    <property type="entry name" value="MmgE_PrpD_N"/>
    <property type="match status" value="1"/>
</dbReference>
<dbReference type="SUPFAM" id="SSF103378">
    <property type="entry name" value="2-methylcitrate dehydratase PrpD"/>
    <property type="match status" value="1"/>
</dbReference>
<name>IRG1_HUMAN</name>
<protein>
    <recommendedName>
        <fullName>Cis-aconitate decarboxylase</fullName>
        <shortName>CAD</shortName>
        <ecNumber evidence="4 5 6">4.1.1.6</ecNumber>
    </recommendedName>
    <alternativeName>
        <fullName>Aconitate decarboxylase</fullName>
    </alternativeName>
    <alternativeName>
        <fullName evidence="9">Aconitate decarboxylase 1</fullName>
    </alternativeName>
    <alternativeName>
        <fullName>Cis-aconitic acid decarboxylase</fullName>
    </alternativeName>
    <alternativeName>
        <fullName evidence="7">Immune-responsive gene 1 protein</fullName>
    </alternativeName>
</protein>
<sequence>MMLKSITESFATAIHGLKVGHLTDRVIQRSKRMILDTLGAGFLGTTTEVFHIASQYSKIYSSNISSTVWGQPDIRLPPTYAAFVNGVAIHSMDFDDTWHPATHPSGAVLPVLTALAEALPRSPKFSGLDLLLAFNVGIEVQGRLLHFAKEANDMPKRFHPPSVVGTLGSAAAASKFLGLSSTKCREALAIAVSHAGAPMANAATQTKPLHIGNAAKHGIEAAFLAMLGLQGNKQVLDLEAGFGAFYANYSPKVLPSIASYSWLLDQQDVAFKRFPAHLSTHWVADAAASVRKHLVAERALLPTDYIKRIVLRIPNVQYVNRPFPVSEHEARHSFQYVACAMLLDGGITVPSFHECQINRPQVRELLSKVELEYPPDNLPSFNILYCEISVTLKDGATFTDRSDTFYGHWRKPLSQEDLEEKFRANASKMLSWDTVESLIKIVKNLEDLEDCSVLTTLLKGPSPPEVASNSPACNNSITNLS</sequence>
<feature type="chain" id="PRO_0000318692" description="Cis-aconitate decarboxylase">
    <location>
        <begin position="1"/>
        <end position="481"/>
    </location>
</feature>
<feature type="region of interest" description="Disordered" evidence="2">
    <location>
        <begin position="462"/>
        <end position="481"/>
    </location>
</feature>
<feature type="compositionally biased region" description="Polar residues" evidence="2">
    <location>
        <begin position="467"/>
        <end position="481"/>
    </location>
</feature>
<feature type="sequence variant" id="VAR_086754" description="Strongly reduced cis-aconitate decarboxylase activity; dbSNP:rs767323284." evidence="5">
    <original>T</original>
    <variation>M</variation>
    <location>
        <position position="97"/>
    </location>
</feature>
<feature type="sequence variant" id="VAR_086755" description="Increased cis-aconitate decarboxylase activity; dbSNP:rs640192." evidence="5">
    <original>N</original>
    <variation>S</variation>
    <location>
        <position position="152"/>
    </location>
</feature>
<feature type="sequence variant" id="VAR_086756" description="Strongly reduced cis-aconitate decarboxylase activity; reduced protein stability; dbSNP:rs1179279159." evidence="5">
    <original>H</original>
    <variation>Q</variation>
    <location>
        <position position="159"/>
    </location>
</feature>
<feature type="sequence variant" id="VAR_086757" description="Strongly reduced cis-aconitate decarboxylase activity; reduced protein stability; dbSNP:rs1471882722." evidence="5">
    <original>H</original>
    <variation>R</variation>
    <location>
        <position position="159"/>
    </location>
</feature>
<feature type="sequence variant" id="VAR_086758" description="Strongly reduced cis-aconitate decarboxylase activity; reduced protein stability; dbSNP:rs1018207074." evidence="5">
    <original>K</original>
    <variation>Q</variation>
    <location>
        <position position="272"/>
    </location>
</feature>
<feature type="sequence variant" id="VAR_086759" description="Does not affect cis-aconitate decarboxylase activity; dbSNP:rs61741168." evidence="5">
    <original>R</original>
    <variation>H</variation>
    <location>
        <position position="273"/>
    </location>
</feature>
<feature type="sequence variant" id="VAR_086760" description="Strongly reduced cis-aconitate decarboxylase activity; reduced protein stability; dbSNP:rs1289708092." evidence="5">
    <original>H</original>
    <variation>Y</variation>
    <location>
        <position position="277"/>
    </location>
</feature>
<feature type="sequence variant" id="VAR_086761" description="Strongly reduced cis-aconitate decarboxylase activity; reduced protein stability; dbSNP:rs755737247." evidence="5">
    <original>R</original>
    <variation>H</variation>
    <location>
        <position position="331"/>
    </location>
</feature>
<feature type="mutagenesis site" description="Abolished cis-aconitate decarboxylase activity." evidence="5">
    <original>D</original>
    <variation>A</variation>
    <location>
        <position position="93"/>
    </location>
</feature>
<feature type="mutagenesis site" description="Strongly reduced cis-aconitate decarboxylase activity." evidence="5">
    <original>T</original>
    <variation>A</variation>
    <location>
        <position position="97"/>
    </location>
</feature>
<feature type="mutagenesis site" description="Abolished cis-aconitate decarboxylase activity." evidence="5">
    <original>H</original>
    <variation>A</variation>
    <location>
        <position position="103"/>
    </location>
</feature>
<feature type="mutagenesis site" description="Abolished cis-aconitate decarboxylase activity." evidence="5">
    <original>H</original>
    <variation>A</variation>
    <location>
        <position position="159"/>
    </location>
</feature>
<feature type="mutagenesis site" description="Abolished cis-aconitate decarboxylase activity." evidence="5">
    <original>K</original>
    <variation>A</variation>
    <location>
        <position position="207"/>
    </location>
</feature>
<feature type="mutagenesis site" description="Abolished cis-aconitate decarboxylase activity." evidence="5">
    <original>K</original>
    <variation>A</variation>
    <location>
        <position position="272"/>
    </location>
</feature>
<feature type="mutagenesis site" description="Abolished cis-aconitate decarboxylase activity." evidence="5">
    <original>H</original>
    <variation>A</variation>
    <location>
        <position position="277"/>
    </location>
</feature>
<feature type="mutagenesis site" description="Abolished cis-aconitate decarboxylase activity." evidence="5">
    <original>Y</original>
    <variation>A</variation>
    <location>
        <position position="318"/>
    </location>
</feature>
<feature type="helix" evidence="11">
    <location>
        <begin position="6"/>
        <end position="16"/>
    </location>
</feature>
<feature type="helix" evidence="11">
    <location>
        <begin position="19"/>
        <end position="21"/>
    </location>
</feature>
<feature type="helix" evidence="11">
    <location>
        <begin position="24"/>
        <end position="44"/>
    </location>
</feature>
<feature type="helix" evidence="11">
    <location>
        <begin position="48"/>
        <end position="57"/>
    </location>
</feature>
<feature type="strand" evidence="11">
    <location>
        <begin position="66"/>
        <end position="68"/>
    </location>
</feature>
<feature type="strand" evidence="11">
    <location>
        <begin position="71"/>
        <end position="76"/>
    </location>
</feature>
<feature type="helix" evidence="11">
    <location>
        <begin position="78"/>
        <end position="90"/>
    </location>
</feature>
<feature type="strand" evidence="11">
    <location>
        <begin position="99"/>
        <end position="101"/>
    </location>
</feature>
<feature type="helix" evidence="11">
    <location>
        <begin position="105"/>
        <end position="107"/>
    </location>
</feature>
<feature type="helix" evidence="11">
    <location>
        <begin position="109"/>
        <end position="118"/>
    </location>
</feature>
<feature type="helix" evidence="11">
    <location>
        <begin position="127"/>
        <end position="145"/>
    </location>
</feature>
<feature type="helix" evidence="11">
    <location>
        <begin position="149"/>
        <end position="152"/>
    </location>
</feature>
<feature type="strand" evidence="11">
    <location>
        <begin position="156"/>
        <end position="158"/>
    </location>
</feature>
<feature type="helix" evidence="11">
    <location>
        <begin position="160"/>
        <end position="177"/>
    </location>
</feature>
<feature type="helix" evidence="11">
    <location>
        <begin position="181"/>
        <end position="192"/>
    </location>
</feature>
<feature type="helix" evidence="11">
    <location>
        <begin position="199"/>
        <end position="201"/>
    </location>
</feature>
<feature type="helix" evidence="11">
    <location>
        <begin position="207"/>
        <end position="226"/>
    </location>
</feature>
<feature type="turn" evidence="11">
    <location>
        <begin position="233"/>
        <end position="237"/>
    </location>
</feature>
<feature type="turn" evidence="11">
    <location>
        <begin position="239"/>
        <end position="241"/>
    </location>
</feature>
<feature type="helix" evidence="11">
    <location>
        <begin position="242"/>
        <end position="245"/>
    </location>
</feature>
<feature type="helix" evidence="11">
    <location>
        <begin position="257"/>
        <end position="259"/>
    </location>
</feature>
<feature type="helix" evidence="11">
    <location>
        <begin position="263"/>
        <end position="265"/>
    </location>
</feature>
<feature type="strand" evidence="11">
    <location>
        <begin position="273"/>
        <end position="276"/>
    </location>
</feature>
<feature type="helix" evidence="11">
    <location>
        <begin position="279"/>
        <end position="296"/>
    </location>
</feature>
<feature type="helix" evidence="11">
    <location>
        <begin position="303"/>
        <end position="305"/>
    </location>
</feature>
<feature type="strand" evidence="11">
    <location>
        <begin position="306"/>
        <end position="312"/>
    </location>
</feature>
<feature type="helix" evidence="11">
    <location>
        <begin position="317"/>
        <end position="319"/>
    </location>
</feature>
<feature type="helix" evidence="11">
    <location>
        <begin position="327"/>
        <end position="331"/>
    </location>
</feature>
<feature type="helix" evidence="11">
    <location>
        <begin position="334"/>
        <end position="344"/>
    </location>
</feature>
<feature type="helix" evidence="11">
    <location>
        <begin position="349"/>
        <end position="352"/>
    </location>
</feature>
<feature type="helix" evidence="11">
    <location>
        <begin position="354"/>
        <end position="357"/>
    </location>
</feature>
<feature type="helix" evidence="11">
    <location>
        <begin position="360"/>
        <end position="366"/>
    </location>
</feature>
<feature type="strand" evidence="11">
    <location>
        <begin position="369"/>
        <end position="372"/>
    </location>
</feature>
<feature type="turn" evidence="11">
    <location>
        <begin position="381"/>
        <end position="383"/>
    </location>
</feature>
<feature type="strand" evidence="11">
    <location>
        <begin position="386"/>
        <end position="392"/>
    </location>
</feature>
<feature type="strand" evidence="11">
    <location>
        <begin position="397"/>
        <end position="404"/>
    </location>
</feature>
<feature type="helix" evidence="11">
    <location>
        <begin position="415"/>
        <end position="426"/>
    </location>
</feature>
<feature type="turn" evidence="11">
    <location>
        <begin position="427"/>
        <end position="429"/>
    </location>
</feature>
<feature type="helix" evidence="11">
    <location>
        <begin position="432"/>
        <end position="443"/>
    </location>
</feature>
<feature type="helix" evidence="11">
    <location>
        <begin position="445"/>
        <end position="447"/>
    </location>
</feature>
<feature type="helix" evidence="11">
    <location>
        <begin position="452"/>
        <end position="458"/>
    </location>
</feature>
<evidence type="ECO:0000250" key="1">
    <source>
        <dbReference type="UniProtKB" id="P54987"/>
    </source>
</evidence>
<evidence type="ECO:0000256" key="2">
    <source>
        <dbReference type="SAM" id="MobiDB-lite"/>
    </source>
</evidence>
<evidence type="ECO:0000269" key="3">
    <source>
    </source>
</evidence>
<evidence type="ECO:0000269" key="4">
    <source>
    </source>
</evidence>
<evidence type="ECO:0000269" key="5">
    <source>
    </source>
</evidence>
<evidence type="ECO:0000269" key="6">
    <source>
    </source>
</evidence>
<evidence type="ECO:0000303" key="7">
    <source>
    </source>
</evidence>
<evidence type="ECO:0000305" key="8"/>
<evidence type="ECO:0000312" key="9">
    <source>
        <dbReference type="HGNC" id="HGNC:33904"/>
    </source>
</evidence>
<evidence type="ECO:0007744" key="10">
    <source>
        <dbReference type="PDB" id="6R6U"/>
    </source>
</evidence>
<evidence type="ECO:0007829" key="11">
    <source>
        <dbReference type="PDB" id="6R6U"/>
    </source>
</evidence>
<comment type="function">
    <text evidence="1 3 4 5 6">Cis-aconitate decarboxylase that catalyzes production of itaconate and is involved in the inhibition of the inflammatory response (PubMed:23609450, PubMed:23610393, PubMed:31548418, PubMed:35662396). Acts as a negative regulator of the Toll-like receptors (TLRs)-mediated inflammatory innate response by stimulating the tumor necrosis factor alpha-induced protein TNFAIP3 expression via reactive oxygen species (ROS) in LPS-tolerized macrophages (PubMed:23609450). Involved in antimicrobial response of innate immune cells; ACOD1-mediated itaconic acid production contributes to the antimicrobial activity of macrophages by generating itaconate, leading to alkylation of proteins, such as TFEB (PubMed:23610393, PubMed:35662396). Involved in antiviral response following infection by flavivirus in neurons: ACOD1-mediated itaconate production inhibits the activity of succinate dehydrogenase, generating a metabolic state in neurons that suppresses replication of viral genomes (By similarity). Plays a role in the embryo implantation (By similarity).</text>
</comment>
<comment type="catalytic activity">
    <reaction evidence="4 5 6">
        <text>cis-aconitate + H(+) = itaconate + CO2</text>
        <dbReference type="Rhea" id="RHEA:15253"/>
        <dbReference type="ChEBI" id="CHEBI:15378"/>
        <dbReference type="ChEBI" id="CHEBI:16383"/>
        <dbReference type="ChEBI" id="CHEBI:16526"/>
        <dbReference type="ChEBI" id="CHEBI:17240"/>
        <dbReference type="EC" id="4.1.1.6"/>
    </reaction>
    <physiologicalReaction direction="left-to-right" evidence="4 5 6">
        <dbReference type="Rhea" id="RHEA:15254"/>
    </physiologicalReaction>
</comment>
<comment type="biophysicochemical properties">
    <kinetics>
        <KM evidence="5">0.61 mM for cis-aconitate</KM>
        <text evidence="5">kcat is 0.94 sec(-1) for cis-aconitate.</text>
    </kinetics>
    <phDependence>
        <text evidence="5">Optimum pH is 7.0.</text>
    </phDependence>
</comment>
<comment type="subunit">
    <text evidence="5">Homodimer.</text>
</comment>
<comment type="subcellular location">
    <subcellularLocation>
        <location evidence="1">Mitochondrion</location>
    </subcellularLocation>
</comment>
<comment type="tissue specificity">
    <text evidence="3 4">Expressed in LPS-tolerized macrophages (at protein level). Expressed in peripheral blood mononuclear cells (PBMCs), microglia and macrophage cells.</text>
</comment>
<comment type="induction">
    <text evidence="3 4">Up-regulated after lipopolysaccharide (LPS) stimulation. Up-regulated in LPS-tolerized macrophage by LPS. Up-regulated in peripheral blood mononuclear cells (PBMC) of patient after acute sepsis.</text>
</comment>
<comment type="similarity">
    <text evidence="8">Belongs to the PrpD family.</text>
</comment>
<comment type="online information" name="Protein Spotlight">
    <link uri="https://www.proteinspotlight.org/back_issues/249/"/>
    <text>Unnatural stuff thank you - Issue 249 of July 2022</text>
</comment>
<organism>
    <name type="scientific">Homo sapiens</name>
    <name type="common">Human</name>
    <dbReference type="NCBI Taxonomy" id="9606"/>
    <lineage>
        <taxon>Eukaryota</taxon>
        <taxon>Metazoa</taxon>
        <taxon>Chordata</taxon>
        <taxon>Craniata</taxon>
        <taxon>Vertebrata</taxon>
        <taxon>Euteleostomi</taxon>
        <taxon>Mammalia</taxon>
        <taxon>Eutheria</taxon>
        <taxon>Euarchontoglires</taxon>
        <taxon>Primates</taxon>
        <taxon>Haplorrhini</taxon>
        <taxon>Catarrhini</taxon>
        <taxon>Hominidae</taxon>
        <taxon>Homo</taxon>
    </lineage>
</organism>
<keyword id="KW-0002">3D-structure</keyword>
<keyword id="KW-0929">Antimicrobial</keyword>
<keyword id="KW-0391">Immunity</keyword>
<keyword id="KW-0395">Inflammatory response</keyword>
<keyword id="KW-0399">Innate immunity</keyword>
<keyword id="KW-0456">Lyase</keyword>
<keyword id="KW-0496">Mitochondrion</keyword>
<keyword id="KW-1267">Proteomics identification</keyword>
<keyword id="KW-1185">Reference proteome</keyword>
<proteinExistence type="evidence at protein level"/>
<reference key="1">
    <citation type="journal article" date="2004" name="Nature">
        <title>The DNA sequence and analysis of human chromosome 13.</title>
        <authorList>
            <person name="Dunham A."/>
            <person name="Matthews L.H."/>
            <person name="Burton J."/>
            <person name="Ashurst J.L."/>
            <person name="Howe K.L."/>
            <person name="Ashcroft K.J."/>
            <person name="Beare D.M."/>
            <person name="Burford D.C."/>
            <person name="Hunt S.E."/>
            <person name="Griffiths-Jones S."/>
            <person name="Jones M.C."/>
            <person name="Keenan S.J."/>
            <person name="Oliver K."/>
            <person name="Scott C.E."/>
            <person name="Ainscough R."/>
            <person name="Almeida J.P."/>
            <person name="Ambrose K.D."/>
            <person name="Andrews D.T."/>
            <person name="Ashwell R.I.S."/>
            <person name="Babbage A.K."/>
            <person name="Bagguley C.L."/>
            <person name="Bailey J."/>
            <person name="Bannerjee R."/>
            <person name="Barlow K.F."/>
            <person name="Bates K."/>
            <person name="Beasley H."/>
            <person name="Bird C.P."/>
            <person name="Bray-Allen S."/>
            <person name="Brown A.J."/>
            <person name="Brown J.Y."/>
            <person name="Burrill W."/>
            <person name="Carder C."/>
            <person name="Carter N.P."/>
            <person name="Chapman J.C."/>
            <person name="Clamp M.E."/>
            <person name="Clark S.Y."/>
            <person name="Clarke G."/>
            <person name="Clee C.M."/>
            <person name="Clegg S.C."/>
            <person name="Cobley V."/>
            <person name="Collins J.E."/>
            <person name="Corby N."/>
            <person name="Coville G.J."/>
            <person name="Deloukas P."/>
            <person name="Dhami P."/>
            <person name="Dunham I."/>
            <person name="Dunn M."/>
            <person name="Earthrowl M.E."/>
            <person name="Ellington A.G."/>
            <person name="Faulkner L."/>
            <person name="Frankish A.G."/>
            <person name="Frankland J."/>
            <person name="French L."/>
            <person name="Garner P."/>
            <person name="Garnett J."/>
            <person name="Gilbert J.G.R."/>
            <person name="Gilson C.J."/>
            <person name="Ghori J."/>
            <person name="Grafham D.V."/>
            <person name="Gribble S.M."/>
            <person name="Griffiths C."/>
            <person name="Hall R.E."/>
            <person name="Hammond S."/>
            <person name="Harley J.L."/>
            <person name="Hart E.A."/>
            <person name="Heath P.D."/>
            <person name="Howden P.J."/>
            <person name="Huckle E.J."/>
            <person name="Hunt P.J."/>
            <person name="Hunt A.R."/>
            <person name="Johnson C."/>
            <person name="Johnson D."/>
            <person name="Kay M."/>
            <person name="Kimberley A.M."/>
            <person name="King A."/>
            <person name="Laird G.K."/>
            <person name="Langford C.J."/>
            <person name="Lawlor S."/>
            <person name="Leongamornlert D.A."/>
            <person name="Lloyd D.M."/>
            <person name="Lloyd C."/>
            <person name="Loveland J.E."/>
            <person name="Lovell J."/>
            <person name="Martin S."/>
            <person name="Mashreghi-Mohammadi M."/>
            <person name="McLaren S.J."/>
            <person name="McMurray A."/>
            <person name="Milne S."/>
            <person name="Moore M.J.F."/>
            <person name="Nickerson T."/>
            <person name="Palmer S.A."/>
            <person name="Pearce A.V."/>
            <person name="Peck A.I."/>
            <person name="Pelan S."/>
            <person name="Phillimore B."/>
            <person name="Porter K.M."/>
            <person name="Rice C.M."/>
            <person name="Searle S."/>
            <person name="Sehra H.K."/>
            <person name="Shownkeen R."/>
            <person name="Skuce C.D."/>
            <person name="Smith M."/>
            <person name="Steward C.A."/>
            <person name="Sycamore N."/>
            <person name="Tester J."/>
            <person name="Thomas D.W."/>
            <person name="Tracey A."/>
            <person name="Tromans A."/>
            <person name="Tubby B."/>
            <person name="Wall M."/>
            <person name="Wallis J.M."/>
            <person name="West A.P."/>
            <person name="Whitehead S.L."/>
            <person name="Willey D.L."/>
            <person name="Wilming L."/>
            <person name="Wray P.W."/>
            <person name="Wright M.W."/>
            <person name="Young L."/>
            <person name="Coulson A."/>
            <person name="Durbin R.M."/>
            <person name="Hubbard T."/>
            <person name="Sulston J.E."/>
            <person name="Beck S."/>
            <person name="Bentley D.R."/>
            <person name="Rogers J."/>
            <person name="Ross M.T."/>
        </authorList>
    </citation>
    <scope>NUCLEOTIDE SEQUENCE [LARGE SCALE GENOMIC DNA]</scope>
</reference>
<reference key="2">
    <citation type="journal article" date="2013" name="J. Biol. Chem.">
        <title>Immune responsive gene 1 (IRG1) promotes endotoxin tolerance by increasing A20 expression in macrophages through ROS.</title>
        <authorList>
            <person name="Li Y."/>
            <person name="Zhang P."/>
            <person name="Wang C."/>
            <person name="Han C."/>
            <person name="Meng J."/>
            <person name="Liu X."/>
            <person name="Xu S."/>
            <person name="Li N."/>
            <person name="Wang Q."/>
            <person name="Shi X."/>
            <person name="Cao X."/>
        </authorList>
    </citation>
    <scope>FUNCTION</scope>
    <scope>INDUCTION BY LPS</scope>
    <scope>TISSUE SPECIFICITY</scope>
</reference>
<reference key="3">
    <citation type="journal article" date="2013" name="Proc. Natl. Acad. Sci. U.S.A.">
        <title>Immune-responsive gene 1 protein links metabolism to immunity by catalyzing itaconic acid production.</title>
        <authorList>
            <person name="Michelucci A."/>
            <person name="Cordes T."/>
            <person name="Ghelfi J."/>
            <person name="Pailot A."/>
            <person name="Reiling N."/>
            <person name="Goldmann O."/>
            <person name="Binz T."/>
            <person name="Wegner A."/>
            <person name="Tallam A."/>
            <person name="Rausell A."/>
            <person name="Buttini M."/>
            <person name="Linster C.L."/>
            <person name="Medina E."/>
            <person name="Balling R."/>
            <person name="Hiller K."/>
        </authorList>
    </citation>
    <scope>FUNCTION</scope>
    <scope>CATALYTIC ACTIVITY</scope>
    <scope>INDUCTION BY LPS</scope>
    <scope>TISSUE SPECIFICITY</scope>
</reference>
<reference key="4">
    <citation type="journal article" date="2022" name="Mol. Cell">
        <title>Itaconate is a lysosomal inducer that promotes antibacterial innate immunity.</title>
        <authorList>
            <person name="Zhang Z."/>
            <person name="Chen C."/>
            <person name="Yang F."/>
            <person name="Zeng Y.X."/>
            <person name="Sun P."/>
            <person name="Liu P."/>
            <person name="Li X."/>
        </authorList>
    </citation>
    <scope>FUNCTION</scope>
    <scope>CATALYTIC ACTIVITY</scope>
</reference>
<reference evidence="10" key="5">
    <citation type="journal article" date="2019" name="Proc. Natl. Acad. Sci. U.S.A.">
        <title>Crystal structure of cis-aconitate decarboxylase reveals the impact of naturally occurring human mutations on itaconate synthesis.</title>
        <authorList>
            <person name="Chen F."/>
            <person name="Lukat P."/>
            <person name="Iqbal A.A."/>
            <person name="Saile K."/>
            <person name="Kaever V."/>
            <person name="van den Heuvel J."/>
            <person name="Blankenfeldt W."/>
            <person name="Buessow K."/>
            <person name="Pessler F."/>
        </authorList>
    </citation>
    <scope>X-RAY CRYSTALLOGRAPHY (1.71 ANGSTROMS) OF 4-461</scope>
    <scope>FUNCTION</scope>
    <scope>CATALYTIC ACTIVITY</scope>
    <scope>BIOPHYSICOCHEMICAL PROPERTIES</scope>
    <scope>SUBUNIT</scope>
    <scope>MUTAGENESIS OF ASP-93; THR-97; HIS-103; HIS-159; LYS-207; LYS-272; HIS-277 AND TYR-318</scope>
    <scope>VARIANTS MET-97; SER-152; ARG-159; GLN-159; GLN-272; HIS-273; TYR-277 AND HIS-331</scope>
    <scope>CHARACTERIZATION OF VARIANTS MET-97; SER-152; ARG-159; GLN-159; GLN-272; HIS-273; TYR-277 AND HIS-331</scope>
</reference>
<accession>A6NK06</accession>
<gene>
    <name evidence="9" type="primary">ACOD1</name>
    <name evidence="7" type="synonym">IRG1</name>
</gene>